<proteinExistence type="inferred from homology"/>
<name>YSC1_THETH</name>
<protein>
    <recommendedName>
        <fullName>Uncharacterized protein in scsB 5'region</fullName>
    </recommendedName>
    <alternativeName>
        <fullName>ORFA</fullName>
    </alternativeName>
</protein>
<reference key="1">
    <citation type="journal article" date="1991" name="Mol. Gen. Genet.">
        <title>Characterization of an operon encoding succinyl-CoA synthetase and malate dehydrogenase from Thermus flavus AT-62 and its expression in Escherichia coli.</title>
        <authorList>
            <person name="Nishiyama M."/>
            <person name="Horinouchi S."/>
            <person name="Beppu T."/>
        </authorList>
    </citation>
    <scope>NUCLEOTIDE SEQUENCE [GENOMIC DNA]</scope>
    <source>
        <strain>ATCC 33923 / DSM 674 / AT-62</strain>
    </source>
</reference>
<evidence type="ECO:0000255" key="1">
    <source>
        <dbReference type="PROSITE-ProRule" id="PRU00208"/>
    </source>
</evidence>
<evidence type="ECO:0000305" key="2"/>
<dbReference type="EMBL" id="X54073">
    <property type="protein sequence ID" value="CAA38004.1"/>
    <property type="molecule type" value="Genomic_DNA"/>
</dbReference>
<dbReference type="InterPro" id="IPR002792">
    <property type="entry name" value="TRAM_dom"/>
</dbReference>
<dbReference type="Pfam" id="PF01938">
    <property type="entry name" value="TRAM"/>
    <property type="match status" value="1"/>
</dbReference>
<dbReference type="PROSITE" id="PS50926">
    <property type="entry name" value="TRAM"/>
    <property type="match status" value="1"/>
</dbReference>
<sequence length="93" mass="10011">LQLARISGVKALSIQALAQALRPQLQVGDTLKLLILKEGKEPHQGVGYLEDGSMVVVDGGSRYRGQEIEVVVTQAIQTQVGRLFFARPAQGAQ</sequence>
<organism>
    <name type="scientific">Thermus thermophilus</name>
    <dbReference type="NCBI Taxonomy" id="274"/>
    <lineage>
        <taxon>Bacteria</taxon>
        <taxon>Thermotogati</taxon>
        <taxon>Deinococcota</taxon>
        <taxon>Deinococci</taxon>
        <taxon>Thermales</taxon>
        <taxon>Thermaceae</taxon>
        <taxon>Thermus</taxon>
    </lineage>
</organism>
<comment type="similarity">
    <text evidence="2">Belongs to the ycf81 family.</text>
</comment>
<feature type="chain" id="PRO_0000217414" description="Uncharacterized protein in scsB 5'region">
    <location>
        <begin position="1" status="less than"/>
        <end position="93"/>
    </location>
</feature>
<feature type="domain" description="TRAM" evidence="1">
    <location>
        <begin position="24"/>
        <end position="85"/>
    </location>
</feature>
<feature type="non-terminal residue">
    <location>
        <position position="1"/>
    </location>
</feature>
<accession>P25124</accession>